<comment type="function">
    <text evidence="1">Catalyzes the last two steps in the biosynthesis of 5-methylaminomethyl-2-thiouridine (mnm(5)s(2)U) at the wobble position (U34) in tRNA. Catalyzes the FAD-dependent demodification of cmnm(5)s(2)U34 to nm(5)s(2)U34, followed by the transfer of a methyl group from S-adenosyl-L-methionine to nm(5)s(2)U34, to form mnm(5)s(2)U34.</text>
</comment>
<comment type="catalytic activity">
    <reaction evidence="1">
        <text>5-aminomethyl-2-thiouridine(34) in tRNA + S-adenosyl-L-methionine = 5-methylaminomethyl-2-thiouridine(34) in tRNA + S-adenosyl-L-homocysteine + H(+)</text>
        <dbReference type="Rhea" id="RHEA:19569"/>
        <dbReference type="Rhea" id="RHEA-COMP:10195"/>
        <dbReference type="Rhea" id="RHEA-COMP:10197"/>
        <dbReference type="ChEBI" id="CHEBI:15378"/>
        <dbReference type="ChEBI" id="CHEBI:57856"/>
        <dbReference type="ChEBI" id="CHEBI:59789"/>
        <dbReference type="ChEBI" id="CHEBI:74454"/>
        <dbReference type="ChEBI" id="CHEBI:74455"/>
        <dbReference type="EC" id="2.1.1.61"/>
    </reaction>
</comment>
<comment type="cofactor">
    <cofactor evidence="1">
        <name>FAD</name>
        <dbReference type="ChEBI" id="CHEBI:57692"/>
    </cofactor>
</comment>
<comment type="subcellular location">
    <subcellularLocation>
        <location evidence="1">Cytoplasm</location>
    </subcellularLocation>
</comment>
<comment type="similarity">
    <text evidence="1">In the N-terminal section; belongs to the methyltransferase superfamily. tRNA (mnm(5)s(2)U34)-methyltransferase family.</text>
</comment>
<comment type="similarity">
    <text evidence="1">In the C-terminal section; belongs to the DAO family.</text>
</comment>
<organism>
    <name type="scientific">Methylibium petroleiphilum (strain ATCC BAA-1232 / LMG 22953 / PM1)</name>
    <dbReference type="NCBI Taxonomy" id="420662"/>
    <lineage>
        <taxon>Bacteria</taxon>
        <taxon>Pseudomonadati</taxon>
        <taxon>Pseudomonadota</taxon>
        <taxon>Betaproteobacteria</taxon>
        <taxon>Burkholderiales</taxon>
        <taxon>Sphaerotilaceae</taxon>
        <taxon>Methylibium</taxon>
    </lineage>
</organism>
<proteinExistence type="inferred from homology"/>
<accession>A2SH83</accession>
<gene>
    <name evidence="1" type="primary">mnmC</name>
    <name type="ordered locus">Mpe_A1964</name>
</gene>
<sequence>MKTAPITPGRLAFSPDGVPLAPEFGDVYHPAAGALQQAHHVFLGGNRLPARWGGRGRFVILETGFGLGNNFLATWDAWQRDPQRCERLVFVSIEKHPLTREDLARAHAASPLPELARALVSAWPLSTPNLHPIAFEGGRVQLLLGFGDVALLLPQLVVSVDAFFLDGFAPARNPEMWEPRRLQRLGRLAAPGATAATWSAARVVRDGLSAAGFTVETTAGTGGKRDITVARFTPRHIAVPPPGGWHAHDAASREALVIGAGLAGCAAAWALSQQGWQCQLLDRAAEPADVTSGNPAGLFHGSFHRDDGPHARTLRAAALATERLAGAWIAQGRVSGQLAGCLRLESRWSDDAARAAMAAQQIAPGYIDWMDRAVASTLSGLALPSGAWFYPGGGWLAPRDYARELLARSGSLFRGGIDVATIERHSGLWRVLDEQRQVIAEAPVLVLANGLGANGLLASGRGEVPWPLTAVRGQISSLATDGHPATLPCPRLPVAGGGYVLPQTGGRLLFGATSQPDDIDPALRDADHRFNLQQLAGLSGCDVEAWSSLPWQGRVGWRAVTSDRLPLIGAVPDLEALDRTSRADQPRFVPRQRDARGGLYVFTGLGSRGITWAALGGQLLASWISGAPCPLEADLRDALDPARYALPRWRSDS</sequence>
<protein>
    <recommendedName>
        <fullName evidence="1">tRNA 5-methylaminomethyl-2-thiouridine biosynthesis bifunctional protein MnmC</fullName>
        <shortName evidence="1">tRNA mnm(5)s(2)U biosynthesis bifunctional protein</shortName>
    </recommendedName>
    <domain>
        <recommendedName>
            <fullName evidence="1">tRNA (mnm(5)s(2)U34)-methyltransferase</fullName>
            <ecNumber evidence="1">2.1.1.61</ecNumber>
        </recommendedName>
    </domain>
    <domain>
        <recommendedName>
            <fullName evidence="1">FAD-dependent cmnm(5)s(2)U34 oxidoreductase</fullName>
            <ecNumber evidence="1">1.5.-.-</ecNumber>
        </recommendedName>
    </domain>
</protein>
<dbReference type="EC" id="2.1.1.61" evidence="1"/>
<dbReference type="EC" id="1.5.-.-" evidence="1"/>
<dbReference type="EMBL" id="CP000555">
    <property type="protein sequence ID" value="ABM94922.1"/>
    <property type="molecule type" value="Genomic_DNA"/>
</dbReference>
<dbReference type="RefSeq" id="WP_011829559.1">
    <property type="nucleotide sequence ID" value="NC_008825.1"/>
</dbReference>
<dbReference type="SMR" id="A2SH83"/>
<dbReference type="STRING" id="420662.Mpe_A1964"/>
<dbReference type="KEGG" id="mpt:Mpe_A1964"/>
<dbReference type="eggNOG" id="COG0665">
    <property type="taxonomic scope" value="Bacteria"/>
</dbReference>
<dbReference type="eggNOG" id="COG4121">
    <property type="taxonomic scope" value="Bacteria"/>
</dbReference>
<dbReference type="HOGENOM" id="CLU_022427_1_0_4"/>
<dbReference type="Proteomes" id="UP000000366">
    <property type="component" value="Chromosome"/>
</dbReference>
<dbReference type="GO" id="GO:0005737">
    <property type="term" value="C:cytoplasm"/>
    <property type="evidence" value="ECO:0007669"/>
    <property type="project" value="UniProtKB-SubCell"/>
</dbReference>
<dbReference type="GO" id="GO:0050660">
    <property type="term" value="F:flavin adenine dinucleotide binding"/>
    <property type="evidence" value="ECO:0007669"/>
    <property type="project" value="UniProtKB-UniRule"/>
</dbReference>
<dbReference type="GO" id="GO:0016645">
    <property type="term" value="F:oxidoreductase activity, acting on the CH-NH group of donors"/>
    <property type="evidence" value="ECO:0007669"/>
    <property type="project" value="InterPro"/>
</dbReference>
<dbReference type="GO" id="GO:0004808">
    <property type="term" value="F:tRNA (5-methylaminomethyl-2-thiouridylate)(34)-methyltransferase activity"/>
    <property type="evidence" value="ECO:0007669"/>
    <property type="project" value="UniProtKB-EC"/>
</dbReference>
<dbReference type="GO" id="GO:0032259">
    <property type="term" value="P:methylation"/>
    <property type="evidence" value="ECO:0007669"/>
    <property type="project" value="UniProtKB-KW"/>
</dbReference>
<dbReference type="GO" id="GO:0002097">
    <property type="term" value="P:tRNA wobble base modification"/>
    <property type="evidence" value="ECO:0007669"/>
    <property type="project" value="UniProtKB-UniRule"/>
</dbReference>
<dbReference type="Gene3D" id="3.30.9.10">
    <property type="entry name" value="D-Amino Acid Oxidase, subunit A, domain 2"/>
    <property type="match status" value="1"/>
</dbReference>
<dbReference type="Gene3D" id="3.50.50.60">
    <property type="entry name" value="FAD/NAD(P)-binding domain"/>
    <property type="match status" value="1"/>
</dbReference>
<dbReference type="Gene3D" id="3.40.50.150">
    <property type="entry name" value="Vaccinia Virus protein VP39"/>
    <property type="match status" value="1"/>
</dbReference>
<dbReference type="HAMAP" id="MF_01102">
    <property type="entry name" value="MnmC"/>
    <property type="match status" value="1"/>
</dbReference>
<dbReference type="InterPro" id="IPR006076">
    <property type="entry name" value="FAD-dep_OxRdtase"/>
</dbReference>
<dbReference type="InterPro" id="IPR036188">
    <property type="entry name" value="FAD/NAD-bd_sf"/>
</dbReference>
<dbReference type="InterPro" id="IPR008471">
    <property type="entry name" value="MnmC-like_methylTransf"/>
</dbReference>
<dbReference type="InterPro" id="IPR029063">
    <property type="entry name" value="SAM-dependent_MTases_sf"/>
</dbReference>
<dbReference type="InterPro" id="IPR023032">
    <property type="entry name" value="tRNA_MAMT_biosynth_bifunc_MnmC"/>
</dbReference>
<dbReference type="InterPro" id="IPR047785">
    <property type="entry name" value="tRNA_MNMC2"/>
</dbReference>
<dbReference type="InterPro" id="IPR017610">
    <property type="entry name" value="tRNA_S-uridine_synth_MnmC_C"/>
</dbReference>
<dbReference type="NCBIfam" id="TIGR03197">
    <property type="entry name" value="MnmC_Cterm"/>
    <property type="match status" value="1"/>
</dbReference>
<dbReference type="NCBIfam" id="NF033855">
    <property type="entry name" value="tRNA_MNMC2"/>
    <property type="match status" value="1"/>
</dbReference>
<dbReference type="PANTHER" id="PTHR13847">
    <property type="entry name" value="SARCOSINE DEHYDROGENASE-RELATED"/>
    <property type="match status" value="1"/>
</dbReference>
<dbReference type="PANTHER" id="PTHR13847:SF283">
    <property type="entry name" value="TRNA 5-METHYLAMINOMETHYL-2-THIOURIDINE BIOSYNTHESIS BIFUNCTIONAL PROTEIN MNMC"/>
    <property type="match status" value="1"/>
</dbReference>
<dbReference type="Pfam" id="PF01266">
    <property type="entry name" value="DAO"/>
    <property type="match status" value="1"/>
</dbReference>
<dbReference type="Pfam" id="PF05430">
    <property type="entry name" value="Methyltransf_30"/>
    <property type="match status" value="1"/>
</dbReference>
<dbReference type="SUPFAM" id="SSF51905">
    <property type="entry name" value="FAD/NAD(P)-binding domain"/>
    <property type="match status" value="1"/>
</dbReference>
<keyword id="KW-0963">Cytoplasm</keyword>
<keyword id="KW-0274">FAD</keyword>
<keyword id="KW-0285">Flavoprotein</keyword>
<keyword id="KW-0489">Methyltransferase</keyword>
<keyword id="KW-0511">Multifunctional enzyme</keyword>
<keyword id="KW-0560">Oxidoreductase</keyword>
<keyword id="KW-1185">Reference proteome</keyword>
<keyword id="KW-0949">S-adenosyl-L-methionine</keyword>
<keyword id="KW-0808">Transferase</keyword>
<keyword id="KW-0819">tRNA processing</keyword>
<reference key="1">
    <citation type="journal article" date="2007" name="J. Bacteriol.">
        <title>Whole-genome analysis of the methyl tert-butyl ether-degrading beta-proteobacterium Methylibium petroleiphilum PM1.</title>
        <authorList>
            <person name="Kane S.R."/>
            <person name="Chakicherla A.Y."/>
            <person name="Chain P.S.G."/>
            <person name="Schmidt R."/>
            <person name="Shin M.W."/>
            <person name="Legler T.C."/>
            <person name="Scow K.M."/>
            <person name="Larimer F.W."/>
            <person name="Lucas S.M."/>
            <person name="Richardson P.M."/>
            <person name="Hristova K.R."/>
        </authorList>
    </citation>
    <scope>NUCLEOTIDE SEQUENCE [LARGE SCALE GENOMIC DNA]</scope>
    <source>
        <strain>ATCC BAA-1232 / LMG 22953 / PM1</strain>
    </source>
</reference>
<name>MNMC_METPP</name>
<evidence type="ECO:0000255" key="1">
    <source>
        <dbReference type="HAMAP-Rule" id="MF_01102"/>
    </source>
</evidence>
<feature type="chain" id="PRO_0000348003" description="tRNA 5-methylaminomethyl-2-thiouridine biosynthesis bifunctional protein MnmC">
    <location>
        <begin position="1"/>
        <end position="653"/>
    </location>
</feature>
<feature type="region of interest" description="tRNA (mnm(5)s(2)U34)-methyltransferase">
    <location>
        <begin position="1"/>
        <end position="233"/>
    </location>
</feature>
<feature type="region of interest" description="FAD-dependent cmnm(5)s(2)U34 oxidoreductase">
    <location>
        <begin position="258"/>
        <end position="653"/>
    </location>
</feature>